<proteinExistence type="evidence at protein level"/>
<evidence type="ECO:0000269" key="1">
    <source>
    </source>
</evidence>
<dbReference type="GO" id="GO:0005576">
    <property type="term" value="C:extracellular region"/>
    <property type="evidence" value="ECO:0007669"/>
    <property type="project" value="UniProtKB-SubCell"/>
</dbReference>
<dbReference type="GO" id="GO:0042742">
    <property type="term" value="P:defense response to bacterium"/>
    <property type="evidence" value="ECO:0007669"/>
    <property type="project" value="UniProtKB-KW"/>
</dbReference>
<dbReference type="GO" id="GO:0031640">
    <property type="term" value="P:killing of cells of another organism"/>
    <property type="evidence" value="ECO:0007669"/>
    <property type="project" value="UniProtKB-KW"/>
</dbReference>
<protein>
    <recommendedName>
        <fullName>Subpeptin JM4-B</fullName>
    </recommendedName>
</protein>
<comment type="function">
    <text evidence="1">Has antibacterial activity against Gram-positive and Gram-negative bacteria including Salmonella, B.cereus, B.megaterium, L.casei, L.viridescens, M.flavus, C.glutamicum, C.crenatum, L.mesenteroides, E.faecalis, S.flexneri, S.aureus and B.thuringiensis.</text>
</comment>
<comment type="subunit">
    <text evidence="1">Monomer.</text>
</comment>
<comment type="subcellular location">
    <subcellularLocation>
        <location evidence="1">Secreted</location>
    </subcellularLocation>
</comment>
<comment type="developmental stage">
    <text evidence="1">Expressed from the mid-exponential phase, maximum activity is reached at the stationary phase.</text>
</comment>
<comment type="mass spectrometry"/>
<reference key="1">
    <citation type="journal article" date="2005" name="Curr. Microbiol.">
        <title>Purification and characterization of two novel antimicrobial peptides Subpeptin JM4-A and Subpeptin JM4-B produced by Bacillus subtilis JM4.</title>
        <authorList>
            <person name="Wu S.-M."/>
            <person name="Jia S.-F."/>
            <person name="Sun D.-D."/>
            <person name="Chen M.-L."/>
            <person name="Chen X."/>
            <person name="Zhong J."/>
            <person name="Huan L.-D."/>
        </authorList>
    </citation>
    <scope>PROTEIN SEQUENCE</scope>
    <scope>FUNCTION</scope>
    <scope>SUBUNIT</scope>
    <scope>SUBCELLULAR LOCATION</scope>
    <scope>DEVELOPMENTAL STAGE</scope>
    <scope>MASS SPECTROMETRY</scope>
    <source>
        <strain>JM4</strain>
    </source>
</reference>
<keyword id="KW-0044">Antibiotic</keyword>
<keyword id="KW-0929">Antimicrobial</keyword>
<keyword id="KW-0078">Bacteriocin</keyword>
<keyword id="KW-0903">Direct protein sequencing</keyword>
<keyword id="KW-0964">Secreted</keyword>
<name>LICB_BACIU</name>
<organism>
    <name type="scientific">Bacillus subtilis</name>
    <dbReference type="NCBI Taxonomy" id="1423"/>
    <lineage>
        <taxon>Bacteria</taxon>
        <taxon>Bacillati</taxon>
        <taxon>Bacillota</taxon>
        <taxon>Bacilli</taxon>
        <taxon>Bacillales</taxon>
        <taxon>Bacillaceae</taxon>
        <taxon>Bacillus</taxon>
    </lineage>
</organism>
<feature type="peptide" id="PRO_0000044153" description="Subpeptin JM4-B">
    <location>
        <begin position="1"/>
        <end position="12"/>
    </location>
</feature>
<sequence>XXKEIXHIFHDN</sequence>
<accession>P83879</accession>